<gene>
    <name evidence="1" type="primary">actP</name>
    <name type="ordered locus">YPDSF_3720</name>
</gene>
<proteinExistence type="inferred from homology"/>
<feature type="chain" id="PRO_1000024346" description="Cation/acetate symporter ActP">
    <location>
        <begin position="1"/>
        <end position="551"/>
    </location>
</feature>
<feature type="transmembrane region" description="Helical" evidence="1">
    <location>
        <begin position="5"/>
        <end position="25"/>
    </location>
</feature>
<feature type="transmembrane region" description="Helical" evidence="1">
    <location>
        <begin position="34"/>
        <end position="54"/>
    </location>
</feature>
<feature type="transmembrane region" description="Helical" evidence="1">
    <location>
        <begin position="77"/>
        <end position="97"/>
    </location>
</feature>
<feature type="transmembrane region" description="Helical" evidence="1">
    <location>
        <begin position="104"/>
        <end position="124"/>
    </location>
</feature>
<feature type="transmembrane region" description="Helical" evidence="1">
    <location>
        <begin position="150"/>
        <end position="170"/>
    </location>
</feature>
<feature type="transmembrane region" description="Helical" evidence="1">
    <location>
        <begin position="184"/>
        <end position="204"/>
    </location>
</feature>
<feature type="transmembrane region" description="Helical" evidence="1">
    <location>
        <begin position="207"/>
        <end position="227"/>
    </location>
</feature>
<feature type="transmembrane region" description="Helical" evidence="1">
    <location>
        <begin position="263"/>
        <end position="283"/>
    </location>
</feature>
<feature type="transmembrane region" description="Helical" evidence="1">
    <location>
        <begin position="304"/>
        <end position="324"/>
    </location>
</feature>
<feature type="transmembrane region" description="Helical" evidence="1">
    <location>
        <begin position="356"/>
        <end position="376"/>
    </location>
</feature>
<feature type="transmembrane region" description="Helical" evidence="1">
    <location>
        <begin position="406"/>
        <end position="426"/>
    </location>
</feature>
<feature type="transmembrane region" description="Helical" evidence="1">
    <location>
        <begin position="430"/>
        <end position="450"/>
    </location>
</feature>
<feature type="transmembrane region" description="Helical" evidence="1">
    <location>
        <begin position="469"/>
        <end position="489"/>
    </location>
</feature>
<feature type="transmembrane region" description="Helical" evidence="1">
    <location>
        <begin position="498"/>
        <end position="518"/>
    </location>
</feature>
<organism>
    <name type="scientific">Yersinia pestis (strain Pestoides F)</name>
    <dbReference type="NCBI Taxonomy" id="386656"/>
    <lineage>
        <taxon>Bacteria</taxon>
        <taxon>Pseudomonadati</taxon>
        <taxon>Pseudomonadota</taxon>
        <taxon>Gammaproteobacteria</taxon>
        <taxon>Enterobacterales</taxon>
        <taxon>Yersiniaceae</taxon>
        <taxon>Yersinia</taxon>
    </lineage>
</organism>
<dbReference type="EMBL" id="CP000668">
    <property type="protein sequence ID" value="ABP42070.1"/>
    <property type="molecule type" value="Genomic_DNA"/>
</dbReference>
<dbReference type="RefSeq" id="WP_002209029.1">
    <property type="nucleotide sequence ID" value="NZ_CP009715.1"/>
</dbReference>
<dbReference type="SMR" id="A4TS08"/>
<dbReference type="GeneID" id="57974352"/>
<dbReference type="KEGG" id="ypp:YPDSF_3720"/>
<dbReference type="PATRIC" id="fig|386656.14.peg.386"/>
<dbReference type="GO" id="GO:0005886">
    <property type="term" value="C:plasma membrane"/>
    <property type="evidence" value="ECO:0007669"/>
    <property type="project" value="UniProtKB-SubCell"/>
</dbReference>
<dbReference type="GO" id="GO:0015123">
    <property type="term" value="F:acetate transmembrane transporter activity"/>
    <property type="evidence" value="ECO:0007669"/>
    <property type="project" value="UniProtKB-UniRule"/>
</dbReference>
<dbReference type="GO" id="GO:0043879">
    <property type="term" value="F:glycolate transmembrane transporter activity"/>
    <property type="evidence" value="ECO:0007669"/>
    <property type="project" value="InterPro"/>
</dbReference>
<dbReference type="GO" id="GO:0015293">
    <property type="term" value="F:symporter activity"/>
    <property type="evidence" value="ECO:0007669"/>
    <property type="project" value="UniProtKB-KW"/>
</dbReference>
<dbReference type="GO" id="GO:0006847">
    <property type="term" value="P:plasma membrane acetate transport"/>
    <property type="evidence" value="ECO:0007669"/>
    <property type="project" value="TreeGrafter"/>
</dbReference>
<dbReference type="GO" id="GO:0006814">
    <property type="term" value="P:sodium ion transport"/>
    <property type="evidence" value="ECO:0007669"/>
    <property type="project" value="UniProtKB-KW"/>
</dbReference>
<dbReference type="CDD" id="cd11480">
    <property type="entry name" value="SLC5sbd_u4"/>
    <property type="match status" value="1"/>
</dbReference>
<dbReference type="FunFam" id="1.20.1730.10:FF:000001">
    <property type="entry name" value="Cation/acetate symporter ActP"/>
    <property type="match status" value="1"/>
</dbReference>
<dbReference type="Gene3D" id="1.20.1730.10">
    <property type="entry name" value="Sodium/glucose cotransporter"/>
    <property type="match status" value="1"/>
</dbReference>
<dbReference type="HAMAP" id="MF_01426">
    <property type="entry name" value="Acet_symport_ActP"/>
    <property type="match status" value="1"/>
</dbReference>
<dbReference type="InterPro" id="IPR014083">
    <property type="entry name" value="Cation/Ac_symporter_ActP"/>
</dbReference>
<dbReference type="InterPro" id="IPR038377">
    <property type="entry name" value="Na/Glc_symporter_sf"/>
</dbReference>
<dbReference type="InterPro" id="IPR001734">
    <property type="entry name" value="Na/solute_symporter"/>
</dbReference>
<dbReference type="InterPro" id="IPR018212">
    <property type="entry name" value="Na/solute_symporter_CS"/>
</dbReference>
<dbReference type="InterPro" id="IPR050277">
    <property type="entry name" value="Sodium:Solute_Symporter"/>
</dbReference>
<dbReference type="NCBIfam" id="NF006903">
    <property type="entry name" value="PRK09395.1"/>
    <property type="match status" value="1"/>
</dbReference>
<dbReference type="NCBIfam" id="NF009135">
    <property type="entry name" value="PRK12488.1"/>
    <property type="match status" value="1"/>
</dbReference>
<dbReference type="NCBIfam" id="TIGR00813">
    <property type="entry name" value="sss"/>
    <property type="match status" value="1"/>
</dbReference>
<dbReference type="NCBIfam" id="TIGR02711">
    <property type="entry name" value="symport_actP"/>
    <property type="match status" value="1"/>
</dbReference>
<dbReference type="PANTHER" id="PTHR48086:SF6">
    <property type="entry name" value="CATION_ACETATE SYMPORTER ACTP"/>
    <property type="match status" value="1"/>
</dbReference>
<dbReference type="PANTHER" id="PTHR48086">
    <property type="entry name" value="SODIUM/PROLINE SYMPORTER-RELATED"/>
    <property type="match status" value="1"/>
</dbReference>
<dbReference type="Pfam" id="PF00474">
    <property type="entry name" value="SSF"/>
    <property type="match status" value="1"/>
</dbReference>
<dbReference type="PROSITE" id="PS00456">
    <property type="entry name" value="NA_SOLUT_SYMP_1"/>
    <property type="match status" value="1"/>
</dbReference>
<dbReference type="PROSITE" id="PS50283">
    <property type="entry name" value="NA_SOLUT_SYMP_3"/>
    <property type="match status" value="1"/>
</dbReference>
<sequence>MKIRHWSALSLFVLPALAQAEALTGEVHRQPLNIQAIVMFLLFVGGTLYITYWASKRTRSRQDYYTAGGRITGFQNGLAIAGDYMSAASFLGISALVYASGYDGLIYSIGFLIGWPIILFLIAERLRNLGRYTFADVASYRLQQRPIRTLSACGSLVVVALYLIAQMVGAGKLIQLLFGLNYHVAVVLVGILMVLYVLFGGMLATTWVQIIKAVMLLSGATFMAIMVMKSVNFNFNTLFSEAVKVHPKGLSIMSPGGLVSDPISALSLGLALMFGTAGLPHILMRFFTVSDAKEARKSVFYATGFIGYFYILTFIIGFGAILLVGPNQTFKDAAGALLGGNNMAAVHLANAVGGSFFLGFISAVAFATILAVVAGLTLAGASAVSHDLYASVIKKGKANERDELRVSKITVIILGIVAIGLGILFENQNIAFMVGLAFSIAASCNFPIIIISMYWDKLTTRGAMIGGWLGLSTAVILMILGPTIWVTILGHEKPIYPYEYPALFSMIAAFVGTWFFSITDNSETGKQERLLFKSQFVRSQTGLGASKGGAH</sequence>
<comment type="function">
    <text evidence="1">Transports acetate.</text>
</comment>
<comment type="subcellular location">
    <subcellularLocation>
        <location evidence="1">Cell inner membrane</location>
        <topology evidence="1">Multi-pass membrane protein</topology>
    </subcellularLocation>
</comment>
<comment type="similarity">
    <text evidence="1">Belongs to the sodium:solute symporter (SSF) (TC 2.A.21) family.</text>
</comment>
<name>ACTP_YERPP</name>
<protein>
    <recommendedName>
        <fullName evidence="1">Cation/acetate symporter ActP</fullName>
    </recommendedName>
    <alternativeName>
        <fullName evidence="1">Acetate permease</fullName>
    </alternativeName>
    <alternativeName>
        <fullName evidence="1">Acetate transporter ActP</fullName>
    </alternativeName>
</protein>
<evidence type="ECO:0000255" key="1">
    <source>
        <dbReference type="HAMAP-Rule" id="MF_01426"/>
    </source>
</evidence>
<keyword id="KW-0997">Cell inner membrane</keyword>
<keyword id="KW-1003">Cell membrane</keyword>
<keyword id="KW-0406">Ion transport</keyword>
<keyword id="KW-0472">Membrane</keyword>
<keyword id="KW-0915">Sodium</keyword>
<keyword id="KW-0739">Sodium transport</keyword>
<keyword id="KW-0769">Symport</keyword>
<keyword id="KW-0812">Transmembrane</keyword>
<keyword id="KW-1133">Transmembrane helix</keyword>
<keyword id="KW-0813">Transport</keyword>
<accession>A4TS08</accession>
<reference key="1">
    <citation type="submission" date="2007-02" db="EMBL/GenBank/DDBJ databases">
        <title>Complete sequence of chromosome of Yersinia pestis Pestoides F.</title>
        <authorList>
            <consortium name="US DOE Joint Genome Institute"/>
            <person name="Copeland A."/>
            <person name="Lucas S."/>
            <person name="Lapidus A."/>
            <person name="Barry K."/>
            <person name="Detter J.C."/>
            <person name="Glavina del Rio T."/>
            <person name="Hammon N."/>
            <person name="Israni S."/>
            <person name="Dalin E."/>
            <person name="Tice H."/>
            <person name="Pitluck S."/>
            <person name="Di Bartolo G."/>
            <person name="Chain P."/>
            <person name="Malfatti S."/>
            <person name="Shin M."/>
            <person name="Vergez L."/>
            <person name="Schmutz J."/>
            <person name="Larimer F."/>
            <person name="Land M."/>
            <person name="Hauser L."/>
            <person name="Worsham P."/>
            <person name="Chu M."/>
            <person name="Bearden S."/>
            <person name="Garcia E."/>
            <person name="Richardson P."/>
        </authorList>
    </citation>
    <scope>NUCLEOTIDE SEQUENCE [LARGE SCALE GENOMIC DNA]</scope>
    <source>
        <strain>Pestoides F</strain>
    </source>
</reference>